<protein>
    <recommendedName>
        <fullName>Mitochondrial inner membrane protease ATP23</fullName>
        <ecNumber>3.4.24.-</ecNumber>
    </recommendedName>
</protein>
<dbReference type="EC" id="3.4.24.-"/>
<dbReference type="EMBL" id="CM003156">
    <property type="protein sequence ID" value="KIS66638.1"/>
    <property type="molecule type" value="Genomic_DNA"/>
</dbReference>
<dbReference type="RefSeq" id="XP_011391591.1">
    <property type="nucleotide sequence ID" value="XM_011393289.1"/>
</dbReference>
<dbReference type="FunCoup" id="Q4P5B3">
    <property type="interactions" value="357"/>
</dbReference>
<dbReference type="STRING" id="237631.Q4P5B3"/>
<dbReference type="MEROPS" id="M76.002"/>
<dbReference type="EnsemblFungi" id="KIS66638">
    <property type="protein sequence ID" value="KIS66638"/>
    <property type="gene ID" value="UMAG_04700"/>
</dbReference>
<dbReference type="GeneID" id="23564795"/>
<dbReference type="KEGG" id="uma:UMAG_04700"/>
<dbReference type="VEuPathDB" id="FungiDB:UMAG_04700"/>
<dbReference type="eggNOG" id="KOG3314">
    <property type="taxonomic scope" value="Eukaryota"/>
</dbReference>
<dbReference type="HOGENOM" id="CLU_079125_0_0_1"/>
<dbReference type="InParanoid" id="Q4P5B3"/>
<dbReference type="OMA" id="EAHQNCV"/>
<dbReference type="OrthoDB" id="285308at2759"/>
<dbReference type="Proteomes" id="UP000000561">
    <property type="component" value="Chromosome 17"/>
</dbReference>
<dbReference type="GO" id="GO:0005743">
    <property type="term" value="C:mitochondrial inner membrane"/>
    <property type="evidence" value="ECO:0007669"/>
    <property type="project" value="UniProtKB-SubCell"/>
</dbReference>
<dbReference type="GO" id="GO:0046872">
    <property type="term" value="F:metal ion binding"/>
    <property type="evidence" value="ECO:0007669"/>
    <property type="project" value="UniProtKB-KW"/>
</dbReference>
<dbReference type="GO" id="GO:0004222">
    <property type="term" value="F:metalloendopeptidase activity"/>
    <property type="evidence" value="ECO:0007669"/>
    <property type="project" value="InterPro"/>
</dbReference>
<dbReference type="GO" id="GO:0034982">
    <property type="term" value="P:mitochondrial protein processing"/>
    <property type="evidence" value="ECO:0000318"/>
    <property type="project" value="GO_Central"/>
</dbReference>
<dbReference type="GO" id="GO:0033615">
    <property type="term" value="P:mitochondrial proton-transporting ATP synthase complex assembly"/>
    <property type="evidence" value="ECO:0000318"/>
    <property type="project" value="GO_Central"/>
</dbReference>
<dbReference type="InterPro" id="IPR019165">
    <property type="entry name" value="Peptidase_M76_ATP23"/>
</dbReference>
<dbReference type="PANTHER" id="PTHR21711">
    <property type="entry name" value="MITOCHONDRIAL INNER MEMBRANE PROTEASE"/>
    <property type="match status" value="1"/>
</dbReference>
<dbReference type="PANTHER" id="PTHR21711:SF0">
    <property type="entry name" value="MITOCHONDRIAL INNER MEMBRANE PROTEASE ATP23 HOMOLOG"/>
    <property type="match status" value="1"/>
</dbReference>
<dbReference type="Pfam" id="PF09768">
    <property type="entry name" value="Peptidase_M76"/>
    <property type="match status" value="1"/>
</dbReference>
<dbReference type="PROSITE" id="PS00142">
    <property type="entry name" value="ZINC_PROTEASE"/>
    <property type="match status" value="1"/>
</dbReference>
<comment type="function">
    <text evidence="1">Has a dual role in the assembly of mitochondrial ATPase. Acts as a protease that removes N-terminal residues of mitochondrial ATPase CF(0) subunit 6 at the intermembrane space side. Also involved in the correct assembly of the membrane-embedded ATPase CF(0) particle, probably mediating association of subunit 6 with the subunit 9 ring (By similarity).</text>
</comment>
<comment type="subcellular location">
    <subcellularLocation>
        <location>Mitochondrion inner membrane</location>
        <topology>Peripheral membrane protein</topology>
        <orientation>Intermembrane side</orientation>
    </subcellularLocation>
    <text evidence="1">Associates loosely with the inner membrane.</text>
</comment>
<comment type="similarity">
    <text evidence="4">Belongs to the peptidase M76 family.</text>
</comment>
<proteinExistence type="inferred from homology"/>
<evidence type="ECO:0000250" key="1"/>
<evidence type="ECO:0000255" key="2">
    <source>
        <dbReference type="PROSITE-ProRule" id="PRU10095"/>
    </source>
</evidence>
<evidence type="ECO:0000256" key="3">
    <source>
        <dbReference type="SAM" id="MobiDB-lite"/>
    </source>
</evidence>
<evidence type="ECO:0000305" key="4"/>
<name>ATP23_MYCMD</name>
<gene>
    <name type="primary">ATP23</name>
    <name type="ORF">UMAG_04700</name>
</gene>
<accession>Q4P5B3</accession>
<accession>A0A0D1CI61</accession>
<keyword id="KW-0378">Hydrolase</keyword>
<keyword id="KW-0472">Membrane</keyword>
<keyword id="KW-0479">Metal-binding</keyword>
<keyword id="KW-0482">Metalloprotease</keyword>
<keyword id="KW-0496">Mitochondrion</keyword>
<keyword id="KW-0999">Mitochondrion inner membrane</keyword>
<keyword id="KW-0645">Protease</keyword>
<keyword id="KW-1185">Reference proteome</keyword>
<organism>
    <name type="scientific">Mycosarcoma maydis</name>
    <name type="common">Corn smut fungus</name>
    <name type="synonym">Ustilago maydis</name>
    <dbReference type="NCBI Taxonomy" id="5270"/>
    <lineage>
        <taxon>Eukaryota</taxon>
        <taxon>Fungi</taxon>
        <taxon>Dikarya</taxon>
        <taxon>Basidiomycota</taxon>
        <taxon>Ustilaginomycotina</taxon>
        <taxon>Ustilaginomycetes</taxon>
        <taxon>Ustilaginales</taxon>
        <taxon>Ustilaginaceae</taxon>
        <taxon>Mycosarcoma</taxon>
    </lineage>
</organism>
<sequence>MATPTPRHQETPQETTERERCEQWTDELFRTSPMVRFMTKHLSLLDCNPLSPLRTASSSSHATASARAQPKLVIAPCPPSIAGGFSPSLRSEPTSESSILLCSNRIFSKAHLEDTLSHEMVHWFDHCRFLVDWSNLRHHACSEIRAASLSGDCGFVREWQRRNYGFKLQHQNCVKRRAVLSILANPACAGDRQKAEQTVDEVFQSCFGDTRPFDEIY</sequence>
<feature type="chain" id="PRO_0000330075" description="Mitochondrial inner membrane protease ATP23">
    <location>
        <begin position="1"/>
        <end position="217"/>
    </location>
</feature>
<feature type="region of interest" description="Disordered" evidence="3">
    <location>
        <begin position="1"/>
        <end position="21"/>
    </location>
</feature>
<feature type="compositionally biased region" description="Basic and acidic residues" evidence="3">
    <location>
        <begin position="7"/>
        <end position="21"/>
    </location>
</feature>
<feature type="active site" evidence="2">
    <location>
        <position position="119"/>
    </location>
</feature>
<feature type="binding site" evidence="1">
    <location>
        <position position="118"/>
    </location>
    <ligand>
        <name>a divalent metal cation</name>
        <dbReference type="ChEBI" id="CHEBI:60240"/>
        <note>catalytic</note>
    </ligand>
</feature>
<feature type="binding site" evidence="1">
    <location>
        <position position="122"/>
    </location>
    <ligand>
        <name>a divalent metal cation</name>
        <dbReference type="ChEBI" id="CHEBI:60240"/>
        <note>catalytic</note>
    </ligand>
</feature>
<reference key="1">
    <citation type="journal article" date="2006" name="Nature">
        <title>Insights from the genome of the biotrophic fungal plant pathogen Ustilago maydis.</title>
        <authorList>
            <person name="Kaemper J."/>
            <person name="Kahmann R."/>
            <person name="Boelker M."/>
            <person name="Ma L.-J."/>
            <person name="Brefort T."/>
            <person name="Saville B.J."/>
            <person name="Banuett F."/>
            <person name="Kronstad J.W."/>
            <person name="Gold S.E."/>
            <person name="Mueller O."/>
            <person name="Perlin M.H."/>
            <person name="Woesten H.A.B."/>
            <person name="de Vries R."/>
            <person name="Ruiz-Herrera J."/>
            <person name="Reynaga-Pena C.G."/>
            <person name="Snetselaar K."/>
            <person name="McCann M."/>
            <person name="Perez-Martin J."/>
            <person name="Feldbruegge M."/>
            <person name="Basse C.W."/>
            <person name="Steinberg G."/>
            <person name="Ibeas J.I."/>
            <person name="Holloman W."/>
            <person name="Guzman P."/>
            <person name="Farman M.L."/>
            <person name="Stajich J.E."/>
            <person name="Sentandreu R."/>
            <person name="Gonzalez-Prieto J.M."/>
            <person name="Kennell J.C."/>
            <person name="Molina L."/>
            <person name="Schirawski J."/>
            <person name="Mendoza-Mendoza A."/>
            <person name="Greilinger D."/>
            <person name="Muench K."/>
            <person name="Roessel N."/>
            <person name="Scherer M."/>
            <person name="Vranes M."/>
            <person name="Ladendorf O."/>
            <person name="Vincon V."/>
            <person name="Fuchs U."/>
            <person name="Sandrock B."/>
            <person name="Meng S."/>
            <person name="Ho E.C.H."/>
            <person name="Cahill M.J."/>
            <person name="Boyce K.J."/>
            <person name="Klose J."/>
            <person name="Klosterman S.J."/>
            <person name="Deelstra H.J."/>
            <person name="Ortiz-Castellanos L."/>
            <person name="Li W."/>
            <person name="Sanchez-Alonso P."/>
            <person name="Schreier P.H."/>
            <person name="Haeuser-Hahn I."/>
            <person name="Vaupel M."/>
            <person name="Koopmann E."/>
            <person name="Friedrich G."/>
            <person name="Voss H."/>
            <person name="Schlueter T."/>
            <person name="Margolis J."/>
            <person name="Platt D."/>
            <person name="Swimmer C."/>
            <person name="Gnirke A."/>
            <person name="Chen F."/>
            <person name="Vysotskaia V."/>
            <person name="Mannhaupt G."/>
            <person name="Gueldener U."/>
            <person name="Muensterkoetter M."/>
            <person name="Haase D."/>
            <person name="Oesterheld M."/>
            <person name="Mewes H.-W."/>
            <person name="Mauceli E.W."/>
            <person name="DeCaprio D."/>
            <person name="Wade C.M."/>
            <person name="Butler J."/>
            <person name="Young S.K."/>
            <person name="Jaffe D.B."/>
            <person name="Calvo S.E."/>
            <person name="Nusbaum C."/>
            <person name="Galagan J.E."/>
            <person name="Birren B.W."/>
        </authorList>
    </citation>
    <scope>NUCLEOTIDE SEQUENCE [LARGE SCALE GENOMIC DNA]</scope>
    <source>
        <strain>DSM 14603 / FGSC 9021 / UM521</strain>
    </source>
</reference>
<reference key="2">
    <citation type="submission" date="2014-09" db="EMBL/GenBank/DDBJ databases">
        <authorList>
            <person name="Gueldener U."/>
            <person name="Muensterkoetter M."/>
            <person name="Walter M.C."/>
            <person name="Mannhaupt G."/>
            <person name="Kahmann R."/>
        </authorList>
    </citation>
    <scope>GENOME REANNOTATION</scope>
    <source>
        <strain>DSM 14603 / FGSC 9021 / UM521</strain>
    </source>
</reference>